<reference key="1">
    <citation type="journal article" date="2009" name="Nature">
        <title>Evolution of pathogenicity and sexual reproduction in eight Candida genomes.</title>
        <authorList>
            <person name="Butler G."/>
            <person name="Rasmussen M.D."/>
            <person name="Lin M.F."/>
            <person name="Santos M.A.S."/>
            <person name="Sakthikumar S."/>
            <person name="Munro C.A."/>
            <person name="Rheinbay E."/>
            <person name="Grabherr M."/>
            <person name="Forche A."/>
            <person name="Reedy J.L."/>
            <person name="Agrafioti I."/>
            <person name="Arnaud M.B."/>
            <person name="Bates S."/>
            <person name="Brown A.J.P."/>
            <person name="Brunke S."/>
            <person name="Costanzo M.C."/>
            <person name="Fitzpatrick D.A."/>
            <person name="de Groot P.W.J."/>
            <person name="Harris D."/>
            <person name="Hoyer L.L."/>
            <person name="Hube B."/>
            <person name="Klis F.M."/>
            <person name="Kodira C."/>
            <person name="Lennard N."/>
            <person name="Logue M.E."/>
            <person name="Martin R."/>
            <person name="Neiman A.M."/>
            <person name="Nikolaou E."/>
            <person name="Quail M.A."/>
            <person name="Quinn J."/>
            <person name="Santos M.C."/>
            <person name="Schmitzberger F.F."/>
            <person name="Sherlock G."/>
            <person name="Shah P."/>
            <person name="Silverstein K.A.T."/>
            <person name="Skrzypek M.S."/>
            <person name="Soll D."/>
            <person name="Staggs R."/>
            <person name="Stansfield I."/>
            <person name="Stumpf M.P.H."/>
            <person name="Sudbery P.E."/>
            <person name="Srikantha T."/>
            <person name="Zeng Q."/>
            <person name="Berman J."/>
            <person name="Berriman M."/>
            <person name="Heitman J."/>
            <person name="Gow N.A.R."/>
            <person name="Lorenz M.C."/>
            <person name="Birren B.W."/>
            <person name="Kellis M."/>
            <person name="Cuomo C.A."/>
        </authorList>
    </citation>
    <scope>NUCLEOTIDE SEQUENCE [LARGE SCALE GENOMIC DNA]</scope>
    <source>
        <strain>ATCC 6260 / CBS 566 / DSM 6381 / JCM 1539 / NBRC 10279 / NRRL Y-324</strain>
    </source>
</reference>
<proteinExistence type="inferred from homology"/>
<sequence>MTEDNAEGQETALSSQNLVSVEITLPKDVSGASKPLTVKMAESDTISDLTSTLGLLSSMRDLTNYYVFYRNTNISETFDELCPISEVISALRVESQPNVKLELRHKPYTLAAVYEHLNKFREVIGLHFIDRRAFELGELSGVGKFDQLQLSQVPDQKEDEKEKVDLGEDDKASISSICDRILDETKLDLSEYGKFYDIYSDLQVPIKSLTISQWSPVSPKEAVRGDLLYLTLQTLENDTYHITCHLSGFFVNSCSTVNFNPARKPSHEPKFLFFDLVSSLSPAFAKTIARNEEILANSSRYAESYLIPSHTSGSYPWLVDTSAISRKPDQSRPQLSILNNGVDGSDNVKDWNEDFQAIRELPSGTVNERILRERLAIKLVSEFTKQATETAVNIIKGNLTPMNPNESVEQHIYMRNGIFYSSGVNATGAFDETGGNEAARYAAAKDLAGVKLLNRIDAKGIYHLATCVVDYMGRRIVCQAPVPGILNDPIVESDEAPADKVCYGLSTDGTKVYSDSQFHEALKPIAEAFHMKPHKVTLPNGFKTKEDIALSKDSKGIRGTDGRNYVIDLYRSTPLDIDFIEKHWRPEHSDSYPHRETVLRHEAVEEWWRRRALAIFKSETERLEAEQGAKKNEGESEKPQILLDAQKVSFNPDAFTHDEVDEEDKEVVREMSLFVTKQLIEEFVEESKKQLCPFDGSHLSSLLHKAGINLRYLGLIATRAQESLEAFEQEEKSKIEDNEKAIEEEKKEEKTEKKEEKEEKADEEKSENEEDKTKPEEPSKGVFDPIKANLNSVRLLAIQEMIARAVKHIFRSFAHTLSSYLLPYFVAHFHNCLLGSQVSSKPEISIDETLTAFADPDALRFITLDHQQVVSMVEEEVLLRFRFELPENWINAVSPITMMREISHKFGIQWKTQGYAFTAEGFKEFQQSTENIIVHKQKSSKKSKKRSSPSVEEVFKRKTIFVADDIISFTPSVKSSSYKATLLDEIFEAARGKIAAEEKDSGVTLLNELVSIYEQIYGVVHPETSNFYSVLSQFYSDLGFTTEASEVARKACVLFERTAGFDSFETISSYINSAYFEAANSSYVNAFKLYEKALGDWDFVFGSHHPSSVTTLTNLAEILAQLKITDKANRLFSAALELSEKINGEDSQITAMIHYRFAGTLVNENRFDEALGHFEKAHTTFSRHIDPNDRLTKDCSNYVANLKTYIAYMKQQAKDKNKPKKVKAPPVPPQATTKKSKNKSKMAQTQISKLHLNSSTRFSSSSRVKPRLKKK</sequence>
<dbReference type="EMBL" id="CH408159">
    <property type="protein sequence ID" value="EDK40151.2"/>
    <property type="molecule type" value="Genomic_DNA"/>
</dbReference>
<dbReference type="RefSeq" id="XP_001483520.1">
    <property type="nucleotide sequence ID" value="XM_001483470.1"/>
</dbReference>
<dbReference type="SMR" id="A5DLU8"/>
<dbReference type="FunCoup" id="A5DLU8">
    <property type="interactions" value="1015"/>
</dbReference>
<dbReference type="STRING" id="294746.A5DLU8"/>
<dbReference type="GeneID" id="5125167"/>
<dbReference type="KEGG" id="pgu:PGUG_04249"/>
<dbReference type="VEuPathDB" id="FungiDB:PGUG_04249"/>
<dbReference type="eggNOG" id="KOG1839">
    <property type="taxonomic scope" value="Eukaryota"/>
</dbReference>
<dbReference type="HOGENOM" id="CLU_003256_2_0_1"/>
<dbReference type="InParanoid" id="A5DLU8"/>
<dbReference type="OMA" id="HPVWDKD"/>
<dbReference type="OrthoDB" id="1414216at2759"/>
<dbReference type="Proteomes" id="UP000001997">
    <property type="component" value="Unassembled WGS sequence"/>
</dbReference>
<dbReference type="GO" id="GO:0005737">
    <property type="term" value="C:cytoplasm"/>
    <property type="evidence" value="ECO:0007669"/>
    <property type="project" value="UniProtKB-SubCell"/>
</dbReference>
<dbReference type="GO" id="GO:0003729">
    <property type="term" value="F:mRNA binding"/>
    <property type="evidence" value="ECO:0007669"/>
    <property type="project" value="TreeGrafter"/>
</dbReference>
<dbReference type="GO" id="GO:0048312">
    <property type="term" value="P:intracellular distribution of mitochondria"/>
    <property type="evidence" value="ECO:0007669"/>
    <property type="project" value="TreeGrafter"/>
</dbReference>
<dbReference type="GO" id="GO:0007005">
    <property type="term" value="P:mitochondrion organization"/>
    <property type="evidence" value="ECO:0007669"/>
    <property type="project" value="UniProtKB-UniRule"/>
</dbReference>
<dbReference type="CDD" id="cd15466">
    <property type="entry name" value="CLU-central"/>
    <property type="match status" value="1"/>
</dbReference>
<dbReference type="Gene3D" id="3.30.2280.10">
    <property type="entry name" value="Hypothetical protein (hspc210)"/>
    <property type="match status" value="1"/>
</dbReference>
<dbReference type="Gene3D" id="1.25.40.10">
    <property type="entry name" value="Tetratricopeptide repeat domain"/>
    <property type="match status" value="1"/>
</dbReference>
<dbReference type="HAMAP" id="MF_03013">
    <property type="entry name" value="CLU"/>
    <property type="match status" value="1"/>
</dbReference>
<dbReference type="InterPro" id="IPR033646">
    <property type="entry name" value="CLU-central"/>
</dbReference>
<dbReference type="InterPro" id="IPR025697">
    <property type="entry name" value="CLU_dom"/>
</dbReference>
<dbReference type="InterPro" id="IPR028275">
    <property type="entry name" value="CLU_N"/>
</dbReference>
<dbReference type="InterPro" id="IPR027523">
    <property type="entry name" value="CLU_prot"/>
</dbReference>
<dbReference type="InterPro" id="IPR023231">
    <property type="entry name" value="GSKIP_dom_sf"/>
</dbReference>
<dbReference type="InterPro" id="IPR011990">
    <property type="entry name" value="TPR-like_helical_dom_sf"/>
</dbReference>
<dbReference type="PANTHER" id="PTHR12601:SF6">
    <property type="entry name" value="CLUSTERED MITOCHONDRIA PROTEIN HOMOLOG"/>
    <property type="match status" value="1"/>
</dbReference>
<dbReference type="PANTHER" id="PTHR12601">
    <property type="entry name" value="EUKARYOTIC TRANSLATION INITIATION FACTOR 3 SUBUNIT EIF-3"/>
    <property type="match status" value="1"/>
</dbReference>
<dbReference type="Pfam" id="PF13236">
    <property type="entry name" value="CLU"/>
    <property type="match status" value="1"/>
</dbReference>
<dbReference type="Pfam" id="PF15044">
    <property type="entry name" value="CLU_N"/>
    <property type="match status" value="1"/>
</dbReference>
<dbReference type="Pfam" id="PF12807">
    <property type="entry name" value="eIF3_p135"/>
    <property type="match status" value="1"/>
</dbReference>
<dbReference type="Pfam" id="PF13424">
    <property type="entry name" value="TPR_12"/>
    <property type="match status" value="1"/>
</dbReference>
<dbReference type="SUPFAM" id="SSF103107">
    <property type="entry name" value="Hypothetical protein c14orf129, hspc210"/>
    <property type="match status" value="1"/>
</dbReference>
<dbReference type="SUPFAM" id="SSF48452">
    <property type="entry name" value="TPR-like"/>
    <property type="match status" value="1"/>
</dbReference>
<dbReference type="PROSITE" id="PS51823">
    <property type="entry name" value="CLU"/>
    <property type="match status" value="1"/>
</dbReference>
<dbReference type="PROSITE" id="PS50293">
    <property type="entry name" value="TPR_REGION"/>
    <property type="match status" value="1"/>
</dbReference>
<gene>
    <name evidence="1" type="primary">CLU1</name>
    <name evidence="1" type="synonym">TIF31</name>
    <name type="ORF">PGUG_04249</name>
</gene>
<evidence type="ECO:0000255" key="1">
    <source>
        <dbReference type="HAMAP-Rule" id="MF_03013"/>
    </source>
</evidence>
<evidence type="ECO:0000255" key="2">
    <source>
        <dbReference type="PROSITE-ProRule" id="PRU01167"/>
    </source>
</evidence>
<evidence type="ECO:0000256" key="3">
    <source>
        <dbReference type="SAM" id="MobiDB-lite"/>
    </source>
</evidence>
<feature type="chain" id="PRO_0000366412" description="Clustered mitochondria protein homolog">
    <location>
        <begin position="1"/>
        <end position="1271"/>
    </location>
</feature>
<feature type="repeat" description="TPR 1">
    <location>
        <begin position="104"/>
        <end position="138"/>
    </location>
</feature>
<feature type="domain" description="Clu" evidence="2">
    <location>
        <begin position="329"/>
        <end position="580"/>
    </location>
</feature>
<feature type="repeat" description="TPR 2">
    <location>
        <begin position="502"/>
        <end position="535"/>
    </location>
</feature>
<feature type="repeat" description="TPR 3">
    <location>
        <begin position="1067"/>
        <end position="1100"/>
    </location>
</feature>
<feature type="repeat" description="TPR 4">
    <location>
        <begin position="1109"/>
        <end position="1142"/>
    </location>
</feature>
<feature type="repeat" description="TPR 5">
    <location>
        <begin position="1151"/>
        <end position="1184"/>
    </location>
</feature>
<feature type="region of interest" description="Disordered" evidence="3">
    <location>
        <begin position="729"/>
        <end position="783"/>
    </location>
</feature>
<feature type="region of interest" description="Disordered" evidence="3">
    <location>
        <begin position="1212"/>
        <end position="1271"/>
    </location>
</feature>
<feature type="compositionally biased region" description="Basic and acidic residues" evidence="3">
    <location>
        <begin position="729"/>
        <end position="763"/>
    </location>
</feature>
<feature type="compositionally biased region" description="Polar residues" evidence="3">
    <location>
        <begin position="1241"/>
        <end position="1253"/>
    </location>
</feature>
<feature type="compositionally biased region" description="Low complexity" evidence="3">
    <location>
        <begin position="1254"/>
        <end position="1263"/>
    </location>
</feature>
<comment type="function">
    <text evidence="1">mRNA-binding protein involved in proper cytoplasmic distribution of mitochondria.</text>
</comment>
<comment type="subunit">
    <text evidence="1">May associate with the eukaryotic translation initiation factor 3 (eIF-3) complex.</text>
</comment>
<comment type="subcellular location">
    <subcellularLocation>
        <location evidence="1">Cytoplasm</location>
    </subcellularLocation>
</comment>
<comment type="similarity">
    <text evidence="1">Belongs to the CLU family.</text>
</comment>
<keyword id="KW-0963">Cytoplasm</keyword>
<keyword id="KW-1185">Reference proteome</keyword>
<keyword id="KW-0677">Repeat</keyword>
<keyword id="KW-0802">TPR repeat</keyword>
<organism>
    <name type="scientific">Meyerozyma guilliermondii (strain ATCC 6260 / CBS 566 / DSM 6381 / JCM 1539 / NBRC 10279 / NRRL Y-324)</name>
    <name type="common">Yeast</name>
    <name type="synonym">Candida guilliermondii</name>
    <dbReference type="NCBI Taxonomy" id="294746"/>
    <lineage>
        <taxon>Eukaryota</taxon>
        <taxon>Fungi</taxon>
        <taxon>Dikarya</taxon>
        <taxon>Ascomycota</taxon>
        <taxon>Saccharomycotina</taxon>
        <taxon>Pichiomycetes</taxon>
        <taxon>Debaryomycetaceae</taxon>
        <taxon>Meyerozyma</taxon>
    </lineage>
</organism>
<accession>A5DLU8</accession>
<name>CLU_PICGU</name>
<protein>
    <recommendedName>
        <fullName evidence="1">Clustered mitochondria protein homolog</fullName>
    </recommendedName>
    <alternativeName>
        <fullName evidence="1">Protein TIF31 homolog</fullName>
    </alternativeName>
</protein>